<keyword id="KW-0012">Acyltransferase</keyword>
<keyword id="KW-0119">Carbohydrate metabolism</keyword>
<keyword id="KW-0963">Cytoplasm</keyword>
<keyword id="KW-0313">Glucose metabolism</keyword>
<keyword id="KW-0556">Organic radical</keyword>
<keyword id="KW-0808">Transferase</keyword>
<proteinExistence type="inferred from homology"/>
<name>PFLB_STAAW</name>
<gene>
    <name type="primary">pflB</name>
    <name type="ordered locus">MW0201</name>
</gene>
<sequence length="749" mass="84862">MLETNKNHATAWQGFKNGRWNRHVDVREFIQLNYTLYEGNDSFLAGPTEATSKLWEQVMQLSKEERERGGMWDMDTKVASTITSHDAGYLDKDLETIVGVQTEKPFKRSMQPFGGIRMAKAACEAYGYELDEETEKIFTDYRKTHNQGVFDAYSREMLNCRKAGVITGLPDAYGRGRIIGDYRRVALYGVDFLMEEKMHDFNTMSTEMSEDVIRLREELSEQYRALKELKELGQKYGFDLSRPAENFKEAVQWLYLAYLAAIKEQNGAAMSLGRTSTFLDIYAERDLKAGVITESEVQEIIDHFIMKLRIVKFARTPDYNELFSGDPTWVTESIGGVGIDGRPLVTKNSFRFLHSLDNLGPAPEPNLTVLWSVRLPDNFKTYCAKMSIKTSSIQYENDDIMRESYGDDYGIACCVSAMTIGKQMQFFGARANLAKTLLYAINGGKDEKSGAQVGPNFEGINSEVLEYDEVFKKFDQMMDWLAGVYINSLNVIHYMHDKYSYERIEMALHDTEIVRTMATGIAGLSVAADSLSAIKYAQVKPIRNEEGLVVDFEIEGDFPKYGNNDDRVDDIAVDLVERFMTKLRSHKTYRDSEHTMSVLTITSNVVYGKKTGNTPDGRKAGEPFAPGANPMHGRDQKGALSSLSSVAKIPYDCCKDGISNTFSIVPKSLGKEPEDQNRNLTSMLDGYAMQCGHHLNINVFNRETLIDAMEHPEEYPQLTIRVSGYAVNFIKLTREQQLDVISRTFHESM</sequence>
<comment type="function">
    <text evidence="1">Catalyzes the conversion of pyruvate to formate and acetyl-CoA.</text>
</comment>
<comment type="catalytic activity">
    <reaction evidence="1">
        <text>formate + acetyl-CoA = pyruvate + CoA</text>
        <dbReference type="Rhea" id="RHEA:11844"/>
        <dbReference type="ChEBI" id="CHEBI:15361"/>
        <dbReference type="ChEBI" id="CHEBI:15740"/>
        <dbReference type="ChEBI" id="CHEBI:57287"/>
        <dbReference type="ChEBI" id="CHEBI:57288"/>
        <dbReference type="EC" id="2.3.1.54"/>
    </reaction>
</comment>
<comment type="pathway">
    <text>Fermentation; pyruvate fermentation; formate from pyruvate: step 1/1.</text>
</comment>
<comment type="subunit">
    <text evidence="1">Homodimer.</text>
</comment>
<comment type="subcellular location">
    <subcellularLocation>
        <location evidence="2">Cytoplasm</location>
    </subcellularLocation>
</comment>
<comment type="miscellaneous">
    <text evidence="1">Several mechanisms have been proposed based on complexes formed with substrate analogs. After activation by the glycine radical, the cysteine radical, Cys-414, can abstract hydrogen atoms from the other active site cysteine, Cys-413, and from coenzyme A, and it can also transfer hydrogen atoms to product radicals. The other active site cysteine can attack the central carbonyl of pyruvate and covalently bind the product acetyl group.</text>
</comment>
<comment type="similarity">
    <text evidence="5">Belongs to the glycyl radical enzyme (GRE) family. PFL subfamily.</text>
</comment>
<organism>
    <name type="scientific">Staphylococcus aureus (strain MW2)</name>
    <dbReference type="NCBI Taxonomy" id="196620"/>
    <lineage>
        <taxon>Bacteria</taxon>
        <taxon>Bacillati</taxon>
        <taxon>Bacillota</taxon>
        <taxon>Bacilli</taxon>
        <taxon>Bacillales</taxon>
        <taxon>Staphylococcaceae</taxon>
        <taxon>Staphylococcus</taxon>
    </lineage>
</organism>
<dbReference type="EC" id="2.3.1.54" evidence="1"/>
<dbReference type="EMBL" id="BA000033">
    <property type="protein sequence ID" value="BAB94066.1"/>
    <property type="molecule type" value="Genomic_DNA"/>
</dbReference>
<dbReference type="RefSeq" id="WP_000894660.1">
    <property type="nucleotide sequence ID" value="NC_003923.1"/>
</dbReference>
<dbReference type="SMR" id="Q7A1W9"/>
<dbReference type="KEGG" id="sam:MW0201"/>
<dbReference type="HOGENOM" id="CLU_023898_0_0_9"/>
<dbReference type="UniPathway" id="UPA00920">
    <property type="reaction ID" value="UER00891"/>
</dbReference>
<dbReference type="GO" id="GO:0005829">
    <property type="term" value="C:cytosol"/>
    <property type="evidence" value="ECO:0007669"/>
    <property type="project" value="TreeGrafter"/>
</dbReference>
<dbReference type="GO" id="GO:0008861">
    <property type="term" value="F:formate C-acetyltransferase activity"/>
    <property type="evidence" value="ECO:0007669"/>
    <property type="project" value="UniProtKB-EC"/>
</dbReference>
<dbReference type="GO" id="GO:0006006">
    <property type="term" value="P:glucose metabolic process"/>
    <property type="evidence" value="ECO:0007669"/>
    <property type="project" value="UniProtKB-KW"/>
</dbReference>
<dbReference type="CDD" id="cd01678">
    <property type="entry name" value="PFL1"/>
    <property type="match status" value="1"/>
</dbReference>
<dbReference type="FunFam" id="3.20.70.20:FF:000003">
    <property type="entry name" value="Formate acetyltransferase"/>
    <property type="match status" value="1"/>
</dbReference>
<dbReference type="Gene3D" id="3.20.70.20">
    <property type="match status" value="1"/>
</dbReference>
<dbReference type="InterPro" id="IPR050244">
    <property type="entry name" value="Auton_GlycylRad_Cofactor"/>
</dbReference>
<dbReference type="InterPro" id="IPR005949">
    <property type="entry name" value="Form_AcTrfase"/>
</dbReference>
<dbReference type="InterPro" id="IPR019777">
    <property type="entry name" value="Form_AcTrfase_GR_CS"/>
</dbReference>
<dbReference type="InterPro" id="IPR001150">
    <property type="entry name" value="Gly_radical"/>
</dbReference>
<dbReference type="InterPro" id="IPR004184">
    <property type="entry name" value="PFL_dom"/>
</dbReference>
<dbReference type="NCBIfam" id="TIGR01255">
    <property type="entry name" value="pyr_form_ly_1"/>
    <property type="match status" value="1"/>
</dbReference>
<dbReference type="PANTHER" id="PTHR30191">
    <property type="entry name" value="FORMATE ACETYLTRANSFERASE"/>
    <property type="match status" value="1"/>
</dbReference>
<dbReference type="PANTHER" id="PTHR30191:SF0">
    <property type="entry name" value="FORMATE ACETYLTRANSFERASE 1"/>
    <property type="match status" value="1"/>
</dbReference>
<dbReference type="Pfam" id="PF01228">
    <property type="entry name" value="Gly_radical"/>
    <property type="match status" value="1"/>
</dbReference>
<dbReference type="Pfam" id="PF02901">
    <property type="entry name" value="PFL-like"/>
    <property type="match status" value="1"/>
</dbReference>
<dbReference type="PIRSF" id="PIRSF000379">
    <property type="entry name" value="For_Ac_trans_1"/>
    <property type="match status" value="1"/>
</dbReference>
<dbReference type="SUPFAM" id="SSF51998">
    <property type="entry name" value="PFL-like glycyl radical enzymes"/>
    <property type="match status" value="1"/>
</dbReference>
<dbReference type="PROSITE" id="PS00850">
    <property type="entry name" value="GLY_RADICAL_1"/>
    <property type="match status" value="1"/>
</dbReference>
<dbReference type="PROSITE" id="PS51149">
    <property type="entry name" value="GLY_RADICAL_2"/>
    <property type="match status" value="1"/>
</dbReference>
<dbReference type="PROSITE" id="PS51554">
    <property type="entry name" value="PFL"/>
    <property type="match status" value="1"/>
</dbReference>
<accession>Q7A1W9</accession>
<evidence type="ECO:0000250" key="1">
    <source>
        <dbReference type="UniProtKB" id="P09373"/>
    </source>
</evidence>
<evidence type="ECO:0000250" key="2">
    <source>
        <dbReference type="UniProtKB" id="Q5HJF4"/>
    </source>
</evidence>
<evidence type="ECO:0000255" key="3">
    <source>
        <dbReference type="PROSITE-ProRule" id="PRU00493"/>
    </source>
</evidence>
<evidence type="ECO:0000255" key="4">
    <source>
        <dbReference type="PROSITE-ProRule" id="PRU00887"/>
    </source>
</evidence>
<evidence type="ECO:0000305" key="5"/>
<protein>
    <recommendedName>
        <fullName>Formate acetyltransferase</fullName>
        <ecNumber evidence="1">2.3.1.54</ecNumber>
    </recommendedName>
    <alternativeName>
        <fullName>Pyruvate formate-lyase</fullName>
    </alternativeName>
</protein>
<feature type="chain" id="PRO_0000271727" description="Formate acetyltransferase">
    <location>
        <begin position="1"/>
        <end position="749"/>
    </location>
</feature>
<feature type="domain" description="PFL" evidence="4">
    <location>
        <begin position="3"/>
        <end position="619"/>
    </location>
</feature>
<feature type="domain" description="Glycine radical" evidence="3">
    <location>
        <begin position="626"/>
        <end position="749"/>
    </location>
</feature>
<feature type="active site" description="S-acetylcysteine intermediate" evidence="1">
    <location>
        <position position="413"/>
    </location>
</feature>
<feature type="active site" description="Cysteine radical intermediate" evidence="1">
    <location>
        <position position="414"/>
    </location>
</feature>
<feature type="modified residue" description="Glycine radical" evidence="3">
    <location>
        <position position="724"/>
    </location>
</feature>
<reference key="1">
    <citation type="journal article" date="2002" name="Lancet">
        <title>Genome and virulence determinants of high virulence community-acquired MRSA.</title>
        <authorList>
            <person name="Baba T."/>
            <person name="Takeuchi F."/>
            <person name="Kuroda M."/>
            <person name="Yuzawa H."/>
            <person name="Aoki K."/>
            <person name="Oguchi A."/>
            <person name="Nagai Y."/>
            <person name="Iwama N."/>
            <person name="Asano K."/>
            <person name="Naimi T."/>
            <person name="Kuroda H."/>
            <person name="Cui L."/>
            <person name="Yamamoto K."/>
            <person name="Hiramatsu K."/>
        </authorList>
    </citation>
    <scope>NUCLEOTIDE SEQUENCE [LARGE SCALE GENOMIC DNA]</scope>
    <source>
        <strain>MW2</strain>
    </source>
</reference>